<name>DAPB_DEHM1</name>
<feature type="chain" id="PRO_0000228343" description="4-hydroxy-tetrahydrodipicolinate reductase">
    <location>
        <begin position="1"/>
        <end position="263"/>
    </location>
</feature>
<feature type="active site" description="Proton donor/acceptor" evidence="1">
    <location>
        <position position="153"/>
    </location>
</feature>
<feature type="active site" description="Proton donor" evidence="1">
    <location>
        <position position="157"/>
    </location>
</feature>
<feature type="binding site" evidence="1">
    <location>
        <begin position="10"/>
        <end position="15"/>
    </location>
    <ligand>
        <name>NAD(+)</name>
        <dbReference type="ChEBI" id="CHEBI:57540"/>
    </ligand>
</feature>
<feature type="binding site" evidence="1">
    <location>
        <position position="38"/>
    </location>
    <ligand>
        <name>NADP(+)</name>
        <dbReference type="ChEBI" id="CHEBI:58349"/>
    </ligand>
</feature>
<feature type="binding site" evidence="1">
    <location>
        <begin position="97"/>
        <end position="99"/>
    </location>
    <ligand>
        <name>NAD(+)</name>
        <dbReference type="ChEBI" id="CHEBI:57540"/>
    </ligand>
</feature>
<feature type="binding site" evidence="1">
    <location>
        <begin position="123"/>
        <end position="126"/>
    </location>
    <ligand>
        <name>NAD(+)</name>
        <dbReference type="ChEBI" id="CHEBI:57540"/>
    </ligand>
</feature>
<feature type="binding site" evidence="1">
    <location>
        <position position="154"/>
    </location>
    <ligand>
        <name>(S)-2,3,4,5-tetrahydrodipicolinate</name>
        <dbReference type="ChEBI" id="CHEBI:16845"/>
    </ligand>
</feature>
<feature type="binding site" evidence="1">
    <location>
        <begin position="163"/>
        <end position="164"/>
    </location>
    <ligand>
        <name>(S)-2,3,4,5-tetrahydrodipicolinate</name>
        <dbReference type="ChEBI" id="CHEBI:16845"/>
    </ligand>
</feature>
<keyword id="KW-0028">Amino-acid biosynthesis</keyword>
<keyword id="KW-0963">Cytoplasm</keyword>
<keyword id="KW-0220">Diaminopimelate biosynthesis</keyword>
<keyword id="KW-0457">Lysine biosynthesis</keyword>
<keyword id="KW-0520">NAD</keyword>
<keyword id="KW-0521">NADP</keyword>
<keyword id="KW-0560">Oxidoreductase</keyword>
<accession>Q3Z7V5</accession>
<dbReference type="EC" id="1.17.1.8" evidence="1"/>
<dbReference type="EMBL" id="CP000027">
    <property type="protein sequence ID" value="AAW39715.1"/>
    <property type="molecule type" value="Genomic_DNA"/>
</dbReference>
<dbReference type="RefSeq" id="WP_010936673.1">
    <property type="nucleotide sequence ID" value="NC_002936.3"/>
</dbReference>
<dbReference type="SMR" id="Q3Z7V5"/>
<dbReference type="FunCoup" id="Q3Z7V5">
    <property type="interactions" value="361"/>
</dbReference>
<dbReference type="STRING" id="243164.DET0971"/>
<dbReference type="GeneID" id="3229677"/>
<dbReference type="KEGG" id="det:DET0971"/>
<dbReference type="PATRIC" id="fig|243164.10.peg.920"/>
<dbReference type="eggNOG" id="COG0289">
    <property type="taxonomic scope" value="Bacteria"/>
</dbReference>
<dbReference type="HOGENOM" id="CLU_047479_0_1_0"/>
<dbReference type="InParanoid" id="Q3Z7V5"/>
<dbReference type="UniPathway" id="UPA00034">
    <property type="reaction ID" value="UER00018"/>
</dbReference>
<dbReference type="Proteomes" id="UP000008289">
    <property type="component" value="Chromosome"/>
</dbReference>
<dbReference type="GO" id="GO:0005829">
    <property type="term" value="C:cytosol"/>
    <property type="evidence" value="ECO:0007669"/>
    <property type="project" value="TreeGrafter"/>
</dbReference>
<dbReference type="GO" id="GO:0008839">
    <property type="term" value="F:4-hydroxy-tetrahydrodipicolinate reductase"/>
    <property type="evidence" value="ECO:0007669"/>
    <property type="project" value="UniProtKB-EC"/>
</dbReference>
<dbReference type="GO" id="GO:0051287">
    <property type="term" value="F:NAD binding"/>
    <property type="evidence" value="ECO:0007669"/>
    <property type="project" value="UniProtKB-UniRule"/>
</dbReference>
<dbReference type="GO" id="GO:0050661">
    <property type="term" value="F:NADP binding"/>
    <property type="evidence" value="ECO:0007669"/>
    <property type="project" value="UniProtKB-UniRule"/>
</dbReference>
<dbReference type="GO" id="GO:0016726">
    <property type="term" value="F:oxidoreductase activity, acting on CH or CH2 groups, NAD or NADP as acceptor"/>
    <property type="evidence" value="ECO:0007669"/>
    <property type="project" value="UniProtKB-UniRule"/>
</dbReference>
<dbReference type="GO" id="GO:0019877">
    <property type="term" value="P:diaminopimelate biosynthetic process"/>
    <property type="evidence" value="ECO:0007669"/>
    <property type="project" value="UniProtKB-UniRule"/>
</dbReference>
<dbReference type="GO" id="GO:0009089">
    <property type="term" value="P:lysine biosynthetic process via diaminopimelate"/>
    <property type="evidence" value="ECO:0007669"/>
    <property type="project" value="UniProtKB-UniRule"/>
</dbReference>
<dbReference type="CDD" id="cd02274">
    <property type="entry name" value="DHDPR_N"/>
    <property type="match status" value="1"/>
</dbReference>
<dbReference type="FunFam" id="3.30.360.10:FF:000009">
    <property type="entry name" value="4-hydroxy-tetrahydrodipicolinate reductase"/>
    <property type="match status" value="1"/>
</dbReference>
<dbReference type="Gene3D" id="3.30.360.10">
    <property type="entry name" value="Dihydrodipicolinate Reductase, domain 2"/>
    <property type="match status" value="1"/>
</dbReference>
<dbReference type="Gene3D" id="3.40.50.720">
    <property type="entry name" value="NAD(P)-binding Rossmann-like Domain"/>
    <property type="match status" value="1"/>
</dbReference>
<dbReference type="HAMAP" id="MF_00102">
    <property type="entry name" value="DapB"/>
    <property type="match status" value="1"/>
</dbReference>
<dbReference type="InterPro" id="IPR022663">
    <property type="entry name" value="DapB_C"/>
</dbReference>
<dbReference type="InterPro" id="IPR000846">
    <property type="entry name" value="DapB_N"/>
</dbReference>
<dbReference type="InterPro" id="IPR022664">
    <property type="entry name" value="DapB_N_CS"/>
</dbReference>
<dbReference type="InterPro" id="IPR023940">
    <property type="entry name" value="DHDPR_bac"/>
</dbReference>
<dbReference type="InterPro" id="IPR036291">
    <property type="entry name" value="NAD(P)-bd_dom_sf"/>
</dbReference>
<dbReference type="NCBIfam" id="TIGR00036">
    <property type="entry name" value="dapB"/>
    <property type="match status" value="1"/>
</dbReference>
<dbReference type="PANTHER" id="PTHR20836:SF0">
    <property type="entry name" value="4-HYDROXY-TETRAHYDRODIPICOLINATE REDUCTASE 1, CHLOROPLASTIC-RELATED"/>
    <property type="match status" value="1"/>
</dbReference>
<dbReference type="PANTHER" id="PTHR20836">
    <property type="entry name" value="DIHYDRODIPICOLINATE REDUCTASE"/>
    <property type="match status" value="1"/>
</dbReference>
<dbReference type="Pfam" id="PF05173">
    <property type="entry name" value="DapB_C"/>
    <property type="match status" value="1"/>
</dbReference>
<dbReference type="Pfam" id="PF01113">
    <property type="entry name" value="DapB_N"/>
    <property type="match status" value="1"/>
</dbReference>
<dbReference type="PIRSF" id="PIRSF000161">
    <property type="entry name" value="DHPR"/>
    <property type="match status" value="1"/>
</dbReference>
<dbReference type="SUPFAM" id="SSF55347">
    <property type="entry name" value="Glyceraldehyde-3-phosphate dehydrogenase-like, C-terminal domain"/>
    <property type="match status" value="1"/>
</dbReference>
<dbReference type="SUPFAM" id="SSF51735">
    <property type="entry name" value="NAD(P)-binding Rossmann-fold domains"/>
    <property type="match status" value="1"/>
</dbReference>
<dbReference type="PROSITE" id="PS01298">
    <property type="entry name" value="DAPB"/>
    <property type="match status" value="1"/>
</dbReference>
<protein>
    <recommendedName>
        <fullName evidence="1">4-hydroxy-tetrahydrodipicolinate reductase</fullName>
        <shortName evidence="1">HTPA reductase</shortName>
        <ecNumber evidence="1">1.17.1.8</ecNumber>
    </recommendedName>
</protein>
<organism>
    <name type="scientific">Dehalococcoides mccartyi (strain ATCC BAA-2266 / KCTC 15142 / 195)</name>
    <name type="common">Dehalococcoides ethenogenes (strain 195)</name>
    <dbReference type="NCBI Taxonomy" id="243164"/>
    <lineage>
        <taxon>Bacteria</taxon>
        <taxon>Bacillati</taxon>
        <taxon>Chloroflexota</taxon>
        <taxon>Dehalococcoidia</taxon>
        <taxon>Dehalococcoidales</taxon>
        <taxon>Dehalococcoidaceae</taxon>
        <taxon>Dehalococcoides</taxon>
    </lineage>
</organism>
<reference key="1">
    <citation type="journal article" date="2005" name="Science">
        <title>Genome sequence of the PCE-dechlorinating bacterium Dehalococcoides ethenogenes.</title>
        <authorList>
            <person name="Seshadri R."/>
            <person name="Adrian L."/>
            <person name="Fouts D.E."/>
            <person name="Eisen J.A."/>
            <person name="Phillippy A.M."/>
            <person name="Methe B.A."/>
            <person name="Ward N.L."/>
            <person name="Nelson W.C."/>
            <person name="DeBoy R.T."/>
            <person name="Khouri H.M."/>
            <person name="Kolonay J.F."/>
            <person name="Dodson R.J."/>
            <person name="Daugherty S.C."/>
            <person name="Brinkac L.M."/>
            <person name="Sullivan S.A."/>
            <person name="Madupu R."/>
            <person name="Nelson K.E."/>
            <person name="Kang K.H."/>
            <person name="Impraim M."/>
            <person name="Tran K."/>
            <person name="Robinson J.M."/>
            <person name="Forberger H.A."/>
            <person name="Fraser C.M."/>
            <person name="Zinder S.H."/>
            <person name="Heidelberg J.F."/>
        </authorList>
    </citation>
    <scope>NUCLEOTIDE SEQUENCE [LARGE SCALE GENOMIC DNA]</scope>
    <source>
        <strain>ATCC BAA-2266 / KCTC 15142 / 195</strain>
    </source>
</reference>
<gene>
    <name evidence="1" type="primary">dapB</name>
    <name type="ordered locus">DET0971</name>
</gene>
<evidence type="ECO:0000255" key="1">
    <source>
        <dbReference type="HAMAP-Rule" id="MF_00102"/>
    </source>
</evidence>
<evidence type="ECO:0000305" key="2"/>
<comment type="function">
    <text evidence="1">Catalyzes the conversion of 4-hydroxy-tetrahydrodipicolinate (HTPA) to tetrahydrodipicolinate.</text>
</comment>
<comment type="catalytic activity">
    <reaction evidence="1">
        <text>(S)-2,3,4,5-tetrahydrodipicolinate + NAD(+) + H2O = (2S,4S)-4-hydroxy-2,3,4,5-tetrahydrodipicolinate + NADH + H(+)</text>
        <dbReference type="Rhea" id="RHEA:35323"/>
        <dbReference type="ChEBI" id="CHEBI:15377"/>
        <dbReference type="ChEBI" id="CHEBI:15378"/>
        <dbReference type="ChEBI" id="CHEBI:16845"/>
        <dbReference type="ChEBI" id="CHEBI:57540"/>
        <dbReference type="ChEBI" id="CHEBI:57945"/>
        <dbReference type="ChEBI" id="CHEBI:67139"/>
        <dbReference type="EC" id="1.17.1.8"/>
    </reaction>
</comment>
<comment type="catalytic activity">
    <reaction evidence="1">
        <text>(S)-2,3,4,5-tetrahydrodipicolinate + NADP(+) + H2O = (2S,4S)-4-hydroxy-2,3,4,5-tetrahydrodipicolinate + NADPH + H(+)</text>
        <dbReference type="Rhea" id="RHEA:35331"/>
        <dbReference type="ChEBI" id="CHEBI:15377"/>
        <dbReference type="ChEBI" id="CHEBI:15378"/>
        <dbReference type="ChEBI" id="CHEBI:16845"/>
        <dbReference type="ChEBI" id="CHEBI:57783"/>
        <dbReference type="ChEBI" id="CHEBI:58349"/>
        <dbReference type="ChEBI" id="CHEBI:67139"/>
        <dbReference type="EC" id="1.17.1.8"/>
    </reaction>
</comment>
<comment type="pathway">
    <text evidence="1">Amino-acid biosynthesis; L-lysine biosynthesis via DAP pathway; (S)-tetrahydrodipicolinate from L-aspartate: step 4/4.</text>
</comment>
<comment type="subcellular location">
    <subcellularLocation>
        <location evidence="1">Cytoplasm</location>
    </subcellularLocation>
</comment>
<comment type="similarity">
    <text evidence="1">Belongs to the DapB family.</text>
</comment>
<comment type="caution">
    <text evidence="2">Was originally thought to be a dihydrodipicolinate reductase (DHDPR), catalyzing the conversion of dihydrodipicolinate to tetrahydrodipicolinate. However, it was shown in E.coli that the substrate of the enzymatic reaction is not dihydrodipicolinate (DHDP) but in fact (2S,4S)-4-hydroxy-2,3,4,5-tetrahydrodipicolinic acid (HTPA), the product released by the DapA-catalyzed reaction.</text>
</comment>
<proteinExistence type="inferred from homology"/>
<sequence>MTPIKVVVHGASGKMGQEVLKTLCQENNLLPVGAVDIRAKSPALPLPDGSGSIPYSADLSSVLSQTKPDVMVDFTIAKASMPAIRIAAAHKVNLVIGTTGFSPEEISEIEQLAKTNDIGIIVAPNFALGAIIMVHLAQEASRFLASAEVIELHHDKKLDSPSGTALATAAAMLKTRGEAFNKPAKENMSDARGQEHDGIRVHSVRLPGLLAHQEVIFGAAGQSLTIRHDAFSRECYMPGVVLAIKEIVQTKGFVFGLDKLLKL</sequence>